<dbReference type="EC" id="3.6.4.13"/>
<dbReference type="EMBL" id="X71982">
    <property type="protein sequence ID" value="CAA50831.1"/>
    <property type="molecule type" value="Genomic_DNA"/>
</dbReference>
<dbReference type="EMBL" id="X72953">
    <property type="protein sequence ID" value="CAA51458.1"/>
    <property type="molecule type" value="Genomic_DNA"/>
</dbReference>
<dbReference type="EMBL" id="AY261361">
    <property type="status" value="NOT_ANNOTATED_CDS"/>
    <property type="molecule type" value="Genomic_DNA"/>
</dbReference>
<dbReference type="PIR" id="JQ2211">
    <property type="entry name" value="JQ2211"/>
</dbReference>
<dbReference type="Proteomes" id="UP000000860">
    <property type="component" value="Segment"/>
</dbReference>
<dbReference type="GO" id="GO:0005524">
    <property type="term" value="F:ATP binding"/>
    <property type="evidence" value="ECO:0007669"/>
    <property type="project" value="UniProtKB-KW"/>
</dbReference>
<dbReference type="GO" id="GO:0016887">
    <property type="term" value="F:ATP hydrolysis activity"/>
    <property type="evidence" value="ECO:0007669"/>
    <property type="project" value="RHEA"/>
</dbReference>
<dbReference type="GO" id="GO:0003677">
    <property type="term" value="F:DNA binding"/>
    <property type="evidence" value="ECO:0007669"/>
    <property type="project" value="InterPro"/>
</dbReference>
<dbReference type="GO" id="GO:0003724">
    <property type="term" value="F:RNA helicase activity"/>
    <property type="evidence" value="ECO:0007669"/>
    <property type="project" value="UniProtKB-EC"/>
</dbReference>
<dbReference type="Gene3D" id="3.40.50.300">
    <property type="entry name" value="P-loop containing nucleotide triphosphate hydrolases"/>
    <property type="match status" value="2"/>
</dbReference>
<dbReference type="InterPro" id="IPR006935">
    <property type="entry name" value="Helicase/UvrB_N"/>
</dbReference>
<dbReference type="InterPro" id="IPR014001">
    <property type="entry name" value="Helicase_ATP-bd"/>
</dbReference>
<dbReference type="InterPro" id="IPR050742">
    <property type="entry name" value="Helicase_Restrict-Modif_Enz"/>
</dbReference>
<dbReference type="InterPro" id="IPR027417">
    <property type="entry name" value="P-loop_NTPase"/>
</dbReference>
<dbReference type="PANTHER" id="PTHR47396:SF1">
    <property type="entry name" value="ATP-DEPENDENT HELICASE IRC3-RELATED"/>
    <property type="match status" value="1"/>
</dbReference>
<dbReference type="PANTHER" id="PTHR47396">
    <property type="entry name" value="TYPE I RESTRICTION ENZYME ECOKI R PROTEIN"/>
    <property type="match status" value="1"/>
</dbReference>
<dbReference type="Pfam" id="PF04851">
    <property type="entry name" value="ResIII"/>
    <property type="match status" value="1"/>
</dbReference>
<dbReference type="SMART" id="SM00487">
    <property type="entry name" value="DEXDc"/>
    <property type="match status" value="1"/>
</dbReference>
<dbReference type="SUPFAM" id="SSF52540">
    <property type="entry name" value="P-loop containing nucleoside triphosphate hydrolases"/>
    <property type="match status" value="2"/>
</dbReference>
<dbReference type="PROSITE" id="PS00690">
    <property type="entry name" value="DEAH_ATP_HELICASE"/>
    <property type="match status" value="1"/>
</dbReference>
<dbReference type="PROSITE" id="PS51192">
    <property type="entry name" value="HELICASE_ATP_BIND_1"/>
    <property type="match status" value="1"/>
</dbReference>
<accession>Q89576</accession>
<comment type="catalytic activity">
    <reaction>
        <text>ATP + H2O = ADP + phosphate + H(+)</text>
        <dbReference type="Rhea" id="RHEA:13065"/>
        <dbReference type="ChEBI" id="CHEBI:15377"/>
        <dbReference type="ChEBI" id="CHEBI:15378"/>
        <dbReference type="ChEBI" id="CHEBI:30616"/>
        <dbReference type="ChEBI" id="CHEBI:43474"/>
        <dbReference type="ChEBI" id="CHEBI:456216"/>
        <dbReference type="EC" id="3.6.4.13"/>
    </reaction>
</comment>
<comment type="induction">
    <text evidence="2">Expressed in the late phase of the viral replicative cycle.</text>
</comment>
<comment type="similarity">
    <text evidence="2">Belongs to the DEAD box helicase family. DEAH subfamily.</text>
</comment>
<proteinExistence type="inferred from homology"/>
<keyword id="KW-0067">ATP-binding</keyword>
<keyword id="KW-0347">Helicase</keyword>
<keyword id="KW-0378">Hydrolase</keyword>
<keyword id="KW-0426">Late protein</keyword>
<keyword id="KW-0547">Nucleotide-binding</keyword>
<sequence length="509" mass="58109">MEAILSFAGIGINYKKLQSKLQHDFGRFLKALTITARALPGQPKHIAIRQETAFTLQGEYIYFPILLRKQFEMFNIVYTAHPVSLRTLPCVETEFPLFNYQQEMVDKIHKKLLPPYGRFYLHLNTGLGKTRIAISIIQKLLYPTLVIVPTKAIQIQWIDELTLLLPHLRVAAYNNAACKKKDITSKEYDVIVGIINTLRKKPEAFFEPFGLVVLDEAHELHSPENYKIFWKIQLSRILGLSATPLDRPDGMDKIIIHHLGQPQRTVSPTTTFSGYVREIEYQGHPDFVKPVCINEKVSAIATIDKLLQDPSRIQLVVNETKRLYSLHTAEPQKWGTNEPYGIIIFVEFRKLLEIFYQALSKEFKDVEIIVPEVALLCGGVSNTALSQAHSASIILLTYGYGRRGISFKHMTSIIMATPRRNNMEQILGRITRQGSDEKKVRIVVDIKDTLSPLSSQVYDRHRIYKKKGYPIFKCSASYQQPYSSNEVLIWDPYNESCLASTTTPPSPSK</sequence>
<protein>
    <recommendedName>
        <fullName>Putative ATP-dependent RNA helicase QP509L</fullName>
        <ecNumber>3.6.4.13</ecNumber>
    </recommendedName>
</protein>
<evidence type="ECO:0000255" key="1">
    <source>
        <dbReference type="PROSITE-ProRule" id="PRU00541"/>
    </source>
</evidence>
<evidence type="ECO:0000305" key="2"/>
<feature type="chain" id="PRO_0000373113" description="Putative ATP-dependent RNA helicase QP509L">
    <location>
        <begin position="1"/>
        <end position="509"/>
    </location>
</feature>
<feature type="domain" description="Helicase ATP-binding" evidence="1">
    <location>
        <begin position="110"/>
        <end position="262"/>
    </location>
</feature>
<feature type="short sequence motif" description="DEAH box">
    <location>
        <begin position="215"/>
        <end position="218"/>
    </location>
</feature>
<feature type="binding site" evidence="1">
    <location>
        <begin position="123"/>
        <end position="130"/>
    </location>
    <ligand>
        <name>ATP</name>
        <dbReference type="ChEBI" id="CHEBI:30616"/>
    </ligand>
</feature>
<gene>
    <name type="ordered locus">Mal-131</name>
    <name type="ORF">j11L</name>
</gene>
<reference key="1">
    <citation type="journal article" date="1994" name="J. Gen. Virol.">
        <title>Nucleotide sequence of a 55 kbp region from the right end of the genome of a pathogenic African swine fever virus isolate (Malawi LIL20/1).</title>
        <authorList>
            <person name="Dixon L.K."/>
            <person name="Twigg S.R.F."/>
            <person name="Baylis S.A."/>
            <person name="Vydelingum S."/>
            <person name="Bristow C."/>
            <person name="Hammond J.M."/>
            <person name="Smith G.L."/>
        </authorList>
    </citation>
    <scope>NUCLEOTIDE SEQUENCE [GENOMIC DNA]</scope>
</reference>
<reference key="2">
    <citation type="journal article" date="1993" name="J. Gen. Virol.">
        <title>Three African swine fever virus genes encoding proteins with homology to putative helicases of vaccinia virus.</title>
        <authorList>
            <person name="Baylis S.A."/>
            <person name="Twigg S.R.F."/>
            <person name="Vydelingum S."/>
            <person name="Dixon L.K."/>
            <person name="Smith G.L."/>
        </authorList>
    </citation>
    <scope>NUCLEOTIDE SEQUENCE [GENOMIC DNA]</scope>
</reference>
<reference key="3">
    <citation type="submission" date="2003-03" db="EMBL/GenBank/DDBJ databases">
        <title>African swine fever virus genomes.</title>
        <authorList>
            <person name="Kutish G.F."/>
            <person name="Rock D.L."/>
        </authorList>
    </citation>
    <scope>NUCLEOTIDE SEQUENCE [LARGE SCALE GENOMIC DNA]</scope>
</reference>
<name>VF509_ASFM2</name>
<organism>
    <name type="scientific">African swine fever virus (isolate Tick/Malawi/Lil 20-1/1983)</name>
    <name type="common">ASFV</name>
    <dbReference type="NCBI Taxonomy" id="10500"/>
    <lineage>
        <taxon>Viruses</taxon>
        <taxon>Varidnaviria</taxon>
        <taxon>Bamfordvirae</taxon>
        <taxon>Nucleocytoviricota</taxon>
        <taxon>Pokkesviricetes</taxon>
        <taxon>Asfuvirales</taxon>
        <taxon>Asfarviridae</taxon>
        <taxon>Asfivirus</taxon>
        <taxon>African swine fever virus</taxon>
    </lineage>
</organism>
<organismHost>
    <name type="scientific">Ornithodoros</name>
    <name type="common">relapsing fever ticks</name>
    <dbReference type="NCBI Taxonomy" id="6937"/>
</organismHost>
<organismHost>
    <name type="scientific">Phacochoerus aethiopicus</name>
    <name type="common">Warthog</name>
    <dbReference type="NCBI Taxonomy" id="85517"/>
</organismHost>
<organismHost>
    <name type="scientific">Phacochoerus africanus</name>
    <name type="common">Warthog</name>
    <dbReference type="NCBI Taxonomy" id="41426"/>
</organismHost>
<organismHost>
    <name type="scientific">Potamochoerus larvatus</name>
    <name type="common">Bushpig</name>
    <dbReference type="NCBI Taxonomy" id="273792"/>
</organismHost>
<organismHost>
    <name type="scientific">Sus scrofa</name>
    <name type="common">Pig</name>
    <dbReference type="NCBI Taxonomy" id="9823"/>
</organismHost>